<keyword id="KW-0963">Cytoplasm</keyword>
<keyword id="KW-0479">Metal-binding</keyword>
<keyword id="KW-0520">NAD</keyword>
<keyword id="KW-1185">Reference proteome</keyword>
<keyword id="KW-0808">Transferase</keyword>
<keyword id="KW-0862">Zinc</keyword>
<protein>
    <recommendedName>
        <fullName evidence="1">NAD-dependent protein deacetylase 2</fullName>
        <ecNumber evidence="1 2">2.3.1.286</ecNumber>
    </recommendedName>
    <alternativeName>
        <fullName evidence="1">Regulatory protein SIR2 homolog 2</fullName>
    </alternativeName>
</protein>
<comment type="function">
    <text evidence="1">NAD-dependent protein deacetylase which modulates the activities of several enzymes which are inactive in their acetylated form.</text>
</comment>
<comment type="catalytic activity">
    <reaction evidence="1">
        <text>N(6)-acetyl-L-lysyl-[protein] + NAD(+) + H2O = 2''-O-acetyl-ADP-D-ribose + nicotinamide + L-lysyl-[protein]</text>
        <dbReference type="Rhea" id="RHEA:43636"/>
        <dbReference type="Rhea" id="RHEA-COMP:9752"/>
        <dbReference type="Rhea" id="RHEA-COMP:10731"/>
        <dbReference type="ChEBI" id="CHEBI:15377"/>
        <dbReference type="ChEBI" id="CHEBI:17154"/>
        <dbReference type="ChEBI" id="CHEBI:29969"/>
        <dbReference type="ChEBI" id="CHEBI:57540"/>
        <dbReference type="ChEBI" id="CHEBI:61930"/>
        <dbReference type="ChEBI" id="CHEBI:83767"/>
        <dbReference type="EC" id="2.3.1.286"/>
    </reaction>
</comment>
<comment type="cofactor">
    <cofactor evidence="1">
        <name>Zn(2+)</name>
        <dbReference type="ChEBI" id="CHEBI:29105"/>
    </cofactor>
    <text evidence="1">Binds 1 zinc ion per subunit.</text>
</comment>
<comment type="subcellular location">
    <subcellularLocation>
        <location evidence="1">Cytoplasm</location>
    </subcellularLocation>
</comment>
<comment type="similarity">
    <text evidence="1">Belongs to the sirtuin family. Class II subfamily.</text>
</comment>
<comment type="sequence caution" evidence="3">
    <conflict type="erroneous initiation">
        <sequence resource="EMBL-CDS" id="BAC52446"/>
    </conflict>
    <text>Extended N-terminus.</text>
</comment>
<dbReference type="EC" id="2.3.1.286" evidence="1 2"/>
<dbReference type="EMBL" id="BA000040">
    <property type="protein sequence ID" value="BAC52446.1"/>
    <property type="status" value="ALT_INIT"/>
    <property type="molecule type" value="Genomic_DNA"/>
</dbReference>
<dbReference type="RefSeq" id="NP_773821.2">
    <property type="nucleotide sequence ID" value="NC_004463.1"/>
</dbReference>
<dbReference type="RefSeq" id="WP_011089916.1">
    <property type="nucleotide sequence ID" value="NC_004463.1"/>
</dbReference>
<dbReference type="SMR" id="Q89EA6"/>
<dbReference type="FunCoup" id="Q89EA6">
    <property type="interactions" value="507"/>
</dbReference>
<dbReference type="STRING" id="224911.AAV28_33550"/>
<dbReference type="EnsemblBacteria" id="BAC52446">
    <property type="protein sequence ID" value="BAC52446"/>
    <property type="gene ID" value="BAC52446"/>
</dbReference>
<dbReference type="GeneID" id="46494145"/>
<dbReference type="KEGG" id="bja:bll7181"/>
<dbReference type="PATRIC" id="fig|224911.44.peg.7248"/>
<dbReference type="eggNOG" id="COG0846">
    <property type="taxonomic scope" value="Bacteria"/>
</dbReference>
<dbReference type="HOGENOM" id="CLU_023643_3_2_5"/>
<dbReference type="InParanoid" id="Q89EA6"/>
<dbReference type="OrthoDB" id="9800582at2"/>
<dbReference type="PhylomeDB" id="Q89EA6"/>
<dbReference type="Proteomes" id="UP000002526">
    <property type="component" value="Chromosome"/>
</dbReference>
<dbReference type="GO" id="GO:0005737">
    <property type="term" value="C:cytoplasm"/>
    <property type="evidence" value="ECO:0007669"/>
    <property type="project" value="UniProtKB-SubCell"/>
</dbReference>
<dbReference type="GO" id="GO:0017136">
    <property type="term" value="F:histone deacetylase activity, NAD-dependent"/>
    <property type="evidence" value="ECO:0000318"/>
    <property type="project" value="GO_Central"/>
</dbReference>
<dbReference type="GO" id="GO:0070403">
    <property type="term" value="F:NAD+ binding"/>
    <property type="evidence" value="ECO:0000318"/>
    <property type="project" value="GO_Central"/>
</dbReference>
<dbReference type="GO" id="GO:0008270">
    <property type="term" value="F:zinc ion binding"/>
    <property type="evidence" value="ECO:0007669"/>
    <property type="project" value="UniProtKB-UniRule"/>
</dbReference>
<dbReference type="CDD" id="cd01409">
    <property type="entry name" value="SIRT4"/>
    <property type="match status" value="1"/>
</dbReference>
<dbReference type="Gene3D" id="3.30.1600.10">
    <property type="entry name" value="SIR2/SIRT2 'Small Domain"/>
    <property type="match status" value="1"/>
</dbReference>
<dbReference type="Gene3D" id="3.40.50.1220">
    <property type="entry name" value="TPP-binding domain"/>
    <property type="match status" value="1"/>
</dbReference>
<dbReference type="HAMAP" id="MF_01967">
    <property type="entry name" value="Sirtuin_ClassII"/>
    <property type="match status" value="1"/>
</dbReference>
<dbReference type="InterPro" id="IPR029035">
    <property type="entry name" value="DHS-like_NAD/FAD-binding_dom"/>
</dbReference>
<dbReference type="InterPro" id="IPR050134">
    <property type="entry name" value="NAD-dep_sirtuin_deacylases"/>
</dbReference>
<dbReference type="InterPro" id="IPR003000">
    <property type="entry name" value="Sirtuin"/>
</dbReference>
<dbReference type="InterPro" id="IPR026591">
    <property type="entry name" value="Sirtuin_cat_small_dom_sf"/>
</dbReference>
<dbReference type="InterPro" id="IPR026587">
    <property type="entry name" value="Sirtuin_class_II"/>
</dbReference>
<dbReference type="InterPro" id="IPR026590">
    <property type="entry name" value="Ssirtuin_cat_dom"/>
</dbReference>
<dbReference type="NCBIfam" id="NF003738">
    <property type="entry name" value="PRK05333.1"/>
    <property type="match status" value="1"/>
</dbReference>
<dbReference type="PANTHER" id="PTHR11085">
    <property type="entry name" value="NAD-DEPENDENT PROTEIN DEACYLASE SIRTUIN-5, MITOCHONDRIAL-RELATED"/>
    <property type="match status" value="1"/>
</dbReference>
<dbReference type="PANTHER" id="PTHR11085:SF10">
    <property type="entry name" value="NAD-DEPENDENT PROTEIN DEACYLASE SIRTUIN-5, MITOCHONDRIAL-RELATED"/>
    <property type="match status" value="1"/>
</dbReference>
<dbReference type="Pfam" id="PF02146">
    <property type="entry name" value="SIR2"/>
    <property type="match status" value="1"/>
</dbReference>
<dbReference type="SUPFAM" id="SSF52467">
    <property type="entry name" value="DHS-like NAD/FAD-binding domain"/>
    <property type="match status" value="1"/>
</dbReference>
<dbReference type="PROSITE" id="PS50305">
    <property type="entry name" value="SIRTUIN"/>
    <property type="match status" value="1"/>
</dbReference>
<evidence type="ECO:0000255" key="1">
    <source>
        <dbReference type="HAMAP-Rule" id="MF_01967"/>
    </source>
</evidence>
<evidence type="ECO:0000255" key="2">
    <source>
        <dbReference type="PROSITE-ProRule" id="PRU00236"/>
    </source>
</evidence>
<evidence type="ECO:0000305" key="3"/>
<proteinExistence type="inferred from homology"/>
<reference key="1">
    <citation type="journal article" date="2002" name="DNA Res.">
        <title>Complete genomic sequence of nitrogen-fixing symbiotic bacterium Bradyrhizobium japonicum USDA110.</title>
        <authorList>
            <person name="Kaneko T."/>
            <person name="Nakamura Y."/>
            <person name="Sato S."/>
            <person name="Minamisawa K."/>
            <person name="Uchiumi T."/>
            <person name="Sasamoto S."/>
            <person name="Watanabe A."/>
            <person name="Idesawa K."/>
            <person name="Iriguchi M."/>
            <person name="Kawashima K."/>
            <person name="Kohara M."/>
            <person name="Matsumoto M."/>
            <person name="Shimpo S."/>
            <person name="Tsuruoka H."/>
            <person name="Wada T."/>
            <person name="Yamada M."/>
            <person name="Tabata S."/>
        </authorList>
    </citation>
    <scope>NUCLEOTIDE SEQUENCE [LARGE SCALE GENOMIC DNA]</scope>
    <source>
        <strain>JCM 10833 / BCRC 13528 / IAM 13628 / NBRC 14792 / USDA 110</strain>
    </source>
</reference>
<feature type="chain" id="PRO_0000110300" description="NAD-dependent protein deacetylase 2">
    <location>
        <begin position="1"/>
        <end position="273"/>
    </location>
</feature>
<feature type="domain" description="Deacetylase sirtuin-type" evidence="2">
    <location>
        <begin position="1"/>
        <end position="273"/>
    </location>
</feature>
<feature type="active site" description="Proton acceptor" evidence="2">
    <location>
        <position position="122"/>
    </location>
</feature>
<feature type="binding site" evidence="1">
    <location>
        <begin position="26"/>
        <end position="46"/>
    </location>
    <ligand>
        <name>NAD(+)</name>
        <dbReference type="ChEBI" id="CHEBI:57540"/>
    </ligand>
</feature>
<feature type="binding site" evidence="1">
    <location>
        <begin position="104"/>
        <end position="107"/>
    </location>
    <ligand>
        <name>NAD(+)</name>
        <dbReference type="ChEBI" id="CHEBI:57540"/>
    </ligand>
</feature>
<feature type="binding site" evidence="1">
    <location>
        <position position="130"/>
    </location>
    <ligand>
        <name>Zn(2+)</name>
        <dbReference type="ChEBI" id="CHEBI:29105"/>
    </ligand>
</feature>
<feature type="binding site" evidence="1">
    <location>
        <position position="133"/>
    </location>
    <ligand>
        <name>Zn(2+)</name>
        <dbReference type="ChEBI" id="CHEBI:29105"/>
    </ligand>
</feature>
<feature type="binding site" evidence="1">
    <location>
        <position position="181"/>
    </location>
    <ligand>
        <name>Zn(2+)</name>
        <dbReference type="ChEBI" id="CHEBI:29105"/>
    </ligand>
</feature>
<feature type="binding site" evidence="1">
    <location>
        <position position="184"/>
    </location>
    <ligand>
        <name>Zn(2+)</name>
        <dbReference type="ChEBI" id="CHEBI:29105"/>
    </ligand>
</feature>
<feature type="binding site" evidence="1">
    <location>
        <begin position="221"/>
        <end position="223"/>
    </location>
    <ligand>
        <name>NAD(+)</name>
        <dbReference type="ChEBI" id="CHEBI:57540"/>
    </ligand>
</feature>
<feature type="binding site" evidence="1">
    <location>
        <begin position="247"/>
        <end position="249"/>
    </location>
    <ligand>
        <name>NAD(+)</name>
        <dbReference type="ChEBI" id="CHEBI:57540"/>
    </ligand>
</feature>
<feature type="binding site" evidence="1">
    <location>
        <position position="265"/>
    </location>
    <ligand>
        <name>NAD(+)</name>
        <dbReference type="ChEBI" id="CHEBI:57540"/>
    </ligand>
</feature>
<name>NPD2_BRADU</name>
<sequence>MSNAPLANQSLQDFVARHQRLFVLTGAGCSTNSGIPDYRDSHGNWKRTQPVNFQAFMSEEHTRRRYWARSLIGWRRFGQARPNDAHHALARLEANGRCGMLLTQNVDRLHQSAGHRQVIDLHGRLDLVRCMGCGAKTPRSEFQDTLGRANAEWLALDASDAPDGDADLEHADFSSFKVPACEACGGILKPDVVFFGENVPRDVVATAQDHLSQADAMLIVGSSLMVYSGFRFVQAAAQRQIPIAAVNLGRTRADDLLTLKVEERCEAALAFLL</sequence>
<gene>
    <name evidence="1" type="primary">cobB2</name>
    <name type="ordered locus">bll7181</name>
</gene>
<organism>
    <name type="scientific">Bradyrhizobium diazoefficiens (strain JCM 10833 / BCRC 13528 / IAM 13628 / NBRC 14792 / USDA 110)</name>
    <dbReference type="NCBI Taxonomy" id="224911"/>
    <lineage>
        <taxon>Bacteria</taxon>
        <taxon>Pseudomonadati</taxon>
        <taxon>Pseudomonadota</taxon>
        <taxon>Alphaproteobacteria</taxon>
        <taxon>Hyphomicrobiales</taxon>
        <taxon>Nitrobacteraceae</taxon>
        <taxon>Bradyrhizobium</taxon>
    </lineage>
</organism>
<accession>Q89EA6</accession>